<comment type="function">
    <text evidence="1">Involved in iron-sulfur (Fe-S) cluster assembly. May act as a regulator of Fe-S biogenesis.</text>
</comment>
<comment type="similarity">
    <text evidence="1">Belongs to the frataxin family.</text>
</comment>
<protein>
    <recommendedName>
        <fullName evidence="1">Iron-sulfur cluster assembly protein CyaY</fullName>
    </recommendedName>
</protein>
<proteinExistence type="inferred from homology"/>
<dbReference type="EMBL" id="CP001635">
    <property type="protein sequence ID" value="ACS17789.1"/>
    <property type="molecule type" value="Genomic_DNA"/>
</dbReference>
<dbReference type="SMR" id="C5CQG3"/>
<dbReference type="STRING" id="543728.Vapar_1138"/>
<dbReference type="KEGG" id="vap:Vapar_1138"/>
<dbReference type="eggNOG" id="COG1965">
    <property type="taxonomic scope" value="Bacteria"/>
</dbReference>
<dbReference type="HOGENOM" id="CLU_080880_3_0_4"/>
<dbReference type="OrthoDB" id="285675at2"/>
<dbReference type="GO" id="GO:0005829">
    <property type="term" value="C:cytosol"/>
    <property type="evidence" value="ECO:0007669"/>
    <property type="project" value="TreeGrafter"/>
</dbReference>
<dbReference type="GO" id="GO:0008199">
    <property type="term" value="F:ferric iron binding"/>
    <property type="evidence" value="ECO:0007669"/>
    <property type="project" value="InterPro"/>
</dbReference>
<dbReference type="GO" id="GO:0008198">
    <property type="term" value="F:ferrous iron binding"/>
    <property type="evidence" value="ECO:0007669"/>
    <property type="project" value="TreeGrafter"/>
</dbReference>
<dbReference type="GO" id="GO:0016226">
    <property type="term" value="P:iron-sulfur cluster assembly"/>
    <property type="evidence" value="ECO:0007669"/>
    <property type="project" value="UniProtKB-UniRule"/>
</dbReference>
<dbReference type="Gene3D" id="3.30.920.10">
    <property type="entry name" value="Frataxin/CyaY"/>
    <property type="match status" value="1"/>
</dbReference>
<dbReference type="HAMAP" id="MF_00142">
    <property type="entry name" value="CyaY"/>
    <property type="match status" value="1"/>
</dbReference>
<dbReference type="InterPro" id="IPR047584">
    <property type="entry name" value="CyaY"/>
</dbReference>
<dbReference type="InterPro" id="IPR002908">
    <property type="entry name" value="Frataxin/CyaY"/>
</dbReference>
<dbReference type="InterPro" id="IPR036524">
    <property type="entry name" value="Frataxin/CyaY_sf"/>
</dbReference>
<dbReference type="InterPro" id="IPR020895">
    <property type="entry name" value="Frataxin_CS"/>
</dbReference>
<dbReference type="NCBIfam" id="TIGR03421">
    <property type="entry name" value="FeS_CyaY"/>
    <property type="match status" value="1"/>
</dbReference>
<dbReference type="PANTHER" id="PTHR16821">
    <property type="entry name" value="FRATAXIN"/>
    <property type="match status" value="1"/>
</dbReference>
<dbReference type="PANTHER" id="PTHR16821:SF2">
    <property type="entry name" value="FRATAXIN, MITOCHONDRIAL"/>
    <property type="match status" value="1"/>
</dbReference>
<dbReference type="Pfam" id="PF01491">
    <property type="entry name" value="Frataxin_Cyay"/>
    <property type="match status" value="1"/>
</dbReference>
<dbReference type="SMART" id="SM01219">
    <property type="entry name" value="Frataxin_Cyay"/>
    <property type="match status" value="1"/>
</dbReference>
<dbReference type="SUPFAM" id="SSF55387">
    <property type="entry name" value="Frataxin/Nqo15-like"/>
    <property type="match status" value="1"/>
</dbReference>
<dbReference type="PROSITE" id="PS01344">
    <property type="entry name" value="FRATAXIN_1"/>
    <property type="match status" value="1"/>
</dbReference>
<dbReference type="PROSITE" id="PS50810">
    <property type="entry name" value="FRATAXIN_2"/>
    <property type="match status" value="1"/>
</dbReference>
<accession>C5CQG3</accession>
<gene>
    <name evidence="1" type="primary">cyaY</name>
    <name type="ordered locus">Vapar_1138</name>
</gene>
<name>CYAY_VARPS</name>
<feature type="chain" id="PRO_1000203292" description="Iron-sulfur cluster assembly protein CyaY">
    <location>
        <begin position="1"/>
        <end position="110"/>
    </location>
</feature>
<organism>
    <name type="scientific">Variovorax paradoxus (strain S110)</name>
    <dbReference type="NCBI Taxonomy" id="543728"/>
    <lineage>
        <taxon>Bacteria</taxon>
        <taxon>Pseudomonadati</taxon>
        <taxon>Pseudomonadota</taxon>
        <taxon>Betaproteobacteria</taxon>
        <taxon>Burkholderiales</taxon>
        <taxon>Comamonadaceae</taxon>
        <taxon>Variovorax</taxon>
    </lineage>
</organism>
<keyword id="KW-0408">Iron</keyword>
<keyword id="KW-0479">Metal-binding</keyword>
<evidence type="ECO:0000255" key="1">
    <source>
        <dbReference type="HAMAP-Rule" id="MF_00142"/>
    </source>
</evidence>
<sequence>MTDSEYMDRAEAALAAIEQGCDRINDATDADIDNQRVGGMITISFKNGSQLIVNLQKPLQEIWLAARSGGYHYRYDGKAWVDTKTGEEFFGNLSREASLQAGQPLEFAAA</sequence>
<reference key="1">
    <citation type="journal article" date="2011" name="J. Bacteriol.">
        <title>Complete genome sequence of the metabolically versatile plant growth-promoting endophyte, Variovorax paradoxus S110.</title>
        <authorList>
            <person name="Han J.I."/>
            <person name="Choi H.K."/>
            <person name="Lee S.W."/>
            <person name="Orwin P.M."/>
            <person name="Kim J."/>
            <person name="Laroe S.L."/>
            <person name="Kim T.G."/>
            <person name="O'Neil J."/>
            <person name="Leadbetter J.R."/>
            <person name="Lee S.Y."/>
            <person name="Hur C.G."/>
            <person name="Spain J.C."/>
            <person name="Ovchinnikova G."/>
            <person name="Goodwin L."/>
            <person name="Han C."/>
        </authorList>
    </citation>
    <scope>NUCLEOTIDE SEQUENCE [LARGE SCALE GENOMIC DNA]</scope>
    <source>
        <strain>S110</strain>
    </source>
</reference>